<gene>
    <name evidence="3" type="primary">vxn</name>
    <name type="synonym">sbt1</name>
    <name type="ORF">XELAEV_18032081mg</name>
</gene>
<protein>
    <recommendedName>
        <fullName evidence="3">Vexin</fullName>
    </recommendedName>
</protein>
<name>VEXIN_XENLA</name>
<sequence>MIKLHRQSYKNLQNISTASPSRVCKSARGKTSTAQKSHVNKGALSCDVHPHQAQELVSQQVELLHVLHRNDEMWRLAVQDTTKHIQSAEKKASRFSRRKQTAPPKTKSLRTPPACSTDKQNAPTVPASPSSYETLGCREQRPENPKDEATLPLTAHNIPKKAPSLLEKIGLKLKRTVEYIGASNCAFEDD</sequence>
<proteinExistence type="evidence at transcript level"/>
<reference key="1">
    <citation type="journal article" date="2016" name="Nature">
        <title>Genome evolution in the allotetraploid frog Xenopus laevis.</title>
        <authorList>
            <person name="Session A.M."/>
            <person name="Uno Y."/>
            <person name="Kwon T."/>
            <person name="Chapman J.A."/>
            <person name="Toyoda A."/>
            <person name="Takahashi S."/>
            <person name="Fukui A."/>
            <person name="Hikosaka A."/>
            <person name="Suzuki A."/>
            <person name="Kondo M."/>
            <person name="van Heeringen S.J."/>
            <person name="Quigley I."/>
            <person name="Heinz S."/>
            <person name="Ogino H."/>
            <person name="Ochi H."/>
            <person name="Hellsten U."/>
            <person name="Lyons J.B."/>
            <person name="Simakov O."/>
            <person name="Putnam N."/>
            <person name="Stites J."/>
            <person name="Kuroki Y."/>
            <person name="Tanaka T."/>
            <person name="Michiue T."/>
            <person name="Watanabe M."/>
            <person name="Bogdanovic O."/>
            <person name="Lister R."/>
            <person name="Georgiou G."/>
            <person name="Paranjpe S.S."/>
            <person name="van Kruijsbergen I."/>
            <person name="Shu S."/>
            <person name="Carlson J."/>
            <person name="Kinoshita T."/>
            <person name="Ohta Y."/>
            <person name="Mawaribuchi S."/>
            <person name="Jenkins J."/>
            <person name="Grimwood J."/>
            <person name="Schmutz J."/>
            <person name="Mitros T."/>
            <person name="Mozaffari S.V."/>
            <person name="Suzuki Y."/>
            <person name="Haramoto Y."/>
            <person name="Yamamoto T.S."/>
            <person name="Takagi C."/>
            <person name="Heald R."/>
            <person name="Miller K."/>
            <person name="Haudenschild C."/>
            <person name="Kitzman J."/>
            <person name="Nakayama T."/>
            <person name="Izutsu Y."/>
            <person name="Robert J."/>
            <person name="Fortriede J."/>
            <person name="Burns K."/>
            <person name="Lotay V."/>
            <person name="Karimi K."/>
            <person name="Yasuoka Y."/>
            <person name="Dichmann D.S."/>
            <person name="Flajnik M.F."/>
            <person name="Houston D.W."/>
            <person name="Shendure J."/>
            <person name="DuPasquier L."/>
            <person name="Vize P.D."/>
            <person name="Zorn A.M."/>
            <person name="Ito M."/>
            <person name="Marcotte E.M."/>
            <person name="Wallingford J.B."/>
            <person name="Ito Y."/>
            <person name="Asashima M."/>
            <person name="Ueno N."/>
            <person name="Matsuda Y."/>
            <person name="Veenstra G.J."/>
            <person name="Fujiyama A."/>
            <person name="Harland R.M."/>
            <person name="Taira M."/>
            <person name="Rokhsar D.S."/>
        </authorList>
    </citation>
    <scope>NUCLEOTIDE SEQUENCE [LARGE SCALE GENOMIC DNA]</scope>
    <source>
        <strain>J</strain>
    </source>
</reference>
<reference key="2">
    <citation type="journal article" date="2018" name="Dev. Biol.">
        <title>C8orf46 homolog encodes a novel protein Vexin that is required for neurogenesis in Xenopus laevis.</title>
        <authorList>
            <person name="Moore K.B."/>
            <person name="Logan M.A."/>
            <person name="Aldiri I."/>
            <person name="Roberts J.M."/>
            <person name="Steele M."/>
            <person name="Vetter M.L."/>
        </authorList>
    </citation>
    <scope>FUNCTION</scope>
    <scope>SUBCELLULAR LOCATION</scope>
    <scope>DISRUPTION PHENOTYPE</scope>
    <scope>TISSUE SPECIFICITY</scope>
    <scope>DEVELOPMENTAL STAGE</scope>
</reference>
<feature type="chain" id="PRO_0000444117" description="Vexin">
    <location>
        <begin position="1"/>
        <end position="190"/>
    </location>
</feature>
<feature type="region of interest" description="Disordered" evidence="1">
    <location>
        <begin position="88"/>
        <end position="156"/>
    </location>
</feature>
<feature type="compositionally biased region" description="Polar residues" evidence="1">
    <location>
        <begin position="117"/>
        <end position="133"/>
    </location>
</feature>
<feature type="compositionally biased region" description="Basic and acidic residues" evidence="1">
    <location>
        <begin position="136"/>
        <end position="149"/>
    </location>
</feature>
<dbReference type="EMBL" id="CM004476">
    <property type="protein sequence ID" value="OCT76877.1"/>
    <property type="molecule type" value="Genomic_DNA"/>
</dbReference>
<dbReference type="STRING" id="8355.A0A1L8FZ84"/>
<dbReference type="PaxDb" id="8355-A0A1L8FZ84"/>
<dbReference type="GeneID" id="108719277"/>
<dbReference type="KEGG" id="xla:108719277"/>
<dbReference type="AGR" id="Xenbase:XB-GENE-12484897"/>
<dbReference type="CTD" id="108719277"/>
<dbReference type="Xenbase" id="XB-GENE-12484897">
    <property type="gene designation" value="vxn.L"/>
</dbReference>
<dbReference type="OMA" id="NDEMWRL"/>
<dbReference type="OrthoDB" id="5340910at2759"/>
<dbReference type="Proteomes" id="UP000186698">
    <property type="component" value="Chromosome 6L"/>
</dbReference>
<dbReference type="Proteomes" id="UP000694892">
    <property type="component" value="Chromosome 6L"/>
</dbReference>
<dbReference type="Bgee" id="108719277">
    <property type="expression patterns" value="Expressed in neurula embryo and 3 other cell types or tissues"/>
</dbReference>
<dbReference type="GO" id="GO:0005634">
    <property type="term" value="C:nucleus"/>
    <property type="evidence" value="ECO:0000314"/>
    <property type="project" value="UniProtKB"/>
</dbReference>
<dbReference type="GO" id="GO:0005886">
    <property type="term" value="C:plasma membrane"/>
    <property type="evidence" value="ECO:0000314"/>
    <property type="project" value="UniProtKB"/>
</dbReference>
<dbReference type="GO" id="GO:0022008">
    <property type="term" value="P:neurogenesis"/>
    <property type="evidence" value="ECO:0000315"/>
    <property type="project" value="UniProtKB"/>
</dbReference>
<dbReference type="GO" id="GO:0030182">
    <property type="term" value="P:neuron differentiation"/>
    <property type="evidence" value="ECO:0000315"/>
    <property type="project" value="UniProtKB"/>
</dbReference>
<dbReference type="InterPro" id="IPR040470">
    <property type="entry name" value="Vexin"/>
</dbReference>
<dbReference type="PANTHER" id="PTHR31520">
    <property type="entry name" value="VEXIN"/>
    <property type="match status" value="1"/>
</dbReference>
<dbReference type="PANTHER" id="PTHR31520:SF1">
    <property type="entry name" value="VEXIN"/>
    <property type="match status" value="1"/>
</dbReference>
<keyword id="KW-1003">Cell membrane</keyword>
<keyword id="KW-0472">Membrane</keyword>
<keyword id="KW-0524">Neurogenesis</keyword>
<keyword id="KW-0539">Nucleus</keyword>
<keyword id="KW-1185">Reference proteome</keyword>
<comment type="function">
    <text evidence="2">Required for neurogenesis in the neural plate and retina. Cooperates with cell cycle inhibitor cdknx/p27(xic1) to enhance neurogenesis and increase the levels of the neuronal determination factor neurog2/X-ngngr-1 (PubMed:29518376).</text>
</comment>
<comment type="subcellular location">
    <subcellularLocation>
        <location evidence="2">Cell membrane</location>
    </subcellularLocation>
    <subcellularLocation>
        <location evidence="2">Nucleus</location>
    </subcellularLocation>
    <text evidence="2">Nuclear localization is essential for its function in neurogenesis.</text>
</comment>
<comment type="tissue specificity">
    <text evidence="2">Expressed in differentiating progenitors in the developing central nervous system (CNS) (PubMed:29518376).</text>
</comment>
<comment type="developmental stage">
    <text evidence="2">Expressed during the course of nervous system (CNS) development, with expression in differentiating primary neurons at stage 15, in the neural tube and olfactory placodes at stage 19, and in the developing eye and other anterior neural structures by stage 27. Expressed in the optic vesicle at stage 25, and increases in the eye at later stages (PubMed:29518376).</text>
</comment>
<comment type="disruption phenotype">
    <text evidence="2">Morpholino knockdown of the protein causes inhibition of primary neurogenesis (PubMed:29518376).</text>
</comment>
<comment type="similarity">
    <text evidence="4">Belongs to the vexin family.</text>
</comment>
<accession>A0A1L8FZ84</accession>
<organism>
    <name type="scientific">Xenopus laevis</name>
    <name type="common">African clawed frog</name>
    <dbReference type="NCBI Taxonomy" id="8355"/>
    <lineage>
        <taxon>Eukaryota</taxon>
        <taxon>Metazoa</taxon>
        <taxon>Chordata</taxon>
        <taxon>Craniata</taxon>
        <taxon>Vertebrata</taxon>
        <taxon>Euteleostomi</taxon>
        <taxon>Amphibia</taxon>
        <taxon>Batrachia</taxon>
        <taxon>Anura</taxon>
        <taxon>Pipoidea</taxon>
        <taxon>Pipidae</taxon>
        <taxon>Xenopodinae</taxon>
        <taxon>Xenopus</taxon>
        <taxon>Xenopus</taxon>
    </lineage>
</organism>
<evidence type="ECO:0000256" key="1">
    <source>
        <dbReference type="SAM" id="MobiDB-lite"/>
    </source>
</evidence>
<evidence type="ECO:0000269" key="2">
    <source>
    </source>
</evidence>
<evidence type="ECO:0000303" key="3">
    <source>
    </source>
</evidence>
<evidence type="ECO:0000305" key="4"/>